<proteinExistence type="inferred from homology"/>
<feature type="chain" id="PRO_0000252969" description="Glutamate 5-kinase">
    <location>
        <begin position="1"/>
        <end position="376"/>
    </location>
</feature>
<feature type="domain" description="PUA" evidence="1">
    <location>
        <begin position="275"/>
        <end position="353"/>
    </location>
</feature>
<feature type="binding site" evidence="1">
    <location>
        <position position="10"/>
    </location>
    <ligand>
        <name>ATP</name>
        <dbReference type="ChEBI" id="CHEBI:30616"/>
    </ligand>
</feature>
<feature type="binding site" evidence="1">
    <location>
        <position position="50"/>
    </location>
    <ligand>
        <name>substrate</name>
    </ligand>
</feature>
<feature type="binding site" evidence="1">
    <location>
        <position position="137"/>
    </location>
    <ligand>
        <name>substrate</name>
    </ligand>
</feature>
<feature type="binding site" evidence="1">
    <location>
        <position position="149"/>
    </location>
    <ligand>
        <name>substrate</name>
    </ligand>
</feature>
<feature type="binding site" evidence="1">
    <location>
        <begin position="169"/>
        <end position="170"/>
    </location>
    <ligand>
        <name>ATP</name>
        <dbReference type="ChEBI" id="CHEBI:30616"/>
    </ligand>
</feature>
<sequence>MADRQRWVIKIGSALLTNDGKGLDCALMQTWVDRMVALRERGIEVVIVSSGAVAEGMTRLGWSARPDSVHELQAAAAVGQMGLVQAWETRFQQHQLHTAQVLLTHDDLSDRKRYLNARSTLLTLLGFGVVPVVNENDTVVTDEIRFGDNDTLAALVANLVEADRLLILTDQEGLFDADPRSNADANLIREARASDPAIVRVAGGGGLLGRGGMATKVRAGKLAARSGAITTIASGRSPEVLIELADGQGPGTTLLPDTTPMNARKQWLAGHLQMRGRLVLDAGAVVRLREGGSSLLPVGVVDVFGQFSRGEMVACEDERGERVGCGLVNYDAADARRICRKKSAEIAGVLGFMNEEELIHRDNLVLMEAGSRVSGA</sequence>
<reference key="1">
    <citation type="journal article" date="2006" name="Nat. Biotechnol.">
        <title>Genome sequence of the ubiquitous hydrocarbon-degrading marine bacterium Alcanivorax borkumensis.</title>
        <authorList>
            <person name="Schneiker S."/>
            <person name="Martins dos Santos V.A.P."/>
            <person name="Bartels D."/>
            <person name="Bekel T."/>
            <person name="Brecht M."/>
            <person name="Buhrmester J."/>
            <person name="Chernikova T.N."/>
            <person name="Denaro R."/>
            <person name="Ferrer M."/>
            <person name="Gertler C."/>
            <person name="Goesmann A."/>
            <person name="Golyshina O.V."/>
            <person name="Kaminski F."/>
            <person name="Khachane A.N."/>
            <person name="Lang S."/>
            <person name="Linke B."/>
            <person name="McHardy A.C."/>
            <person name="Meyer F."/>
            <person name="Nechitaylo T."/>
            <person name="Puehler A."/>
            <person name="Regenhardt D."/>
            <person name="Rupp O."/>
            <person name="Sabirova J.S."/>
            <person name="Selbitschka W."/>
            <person name="Yakimov M.M."/>
            <person name="Timmis K.N."/>
            <person name="Vorhoelter F.-J."/>
            <person name="Weidner S."/>
            <person name="Kaiser O."/>
            <person name="Golyshin P.N."/>
        </authorList>
    </citation>
    <scope>NUCLEOTIDE SEQUENCE [LARGE SCALE GENOMIC DNA]</scope>
    <source>
        <strain>ATCC 700651 / DSM 11573 / NCIMB 13689 / SK2</strain>
    </source>
</reference>
<protein>
    <recommendedName>
        <fullName evidence="1">Glutamate 5-kinase</fullName>
        <ecNumber evidence="1">2.7.2.11</ecNumber>
    </recommendedName>
    <alternativeName>
        <fullName evidence="1">Gamma-glutamyl kinase</fullName>
        <shortName evidence="1">GK</shortName>
    </alternativeName>
</protein>
<gene>
    <name evidence="1" type="primary">proB</name>
    <name type="ordered locus">ABO_0455</name>
</gene>
<keyword id="KW-0028">Amino-acid biosynthesis</keyword>
<keyword id="KW-0067">ATP-binding</keyword>
<keyword id="KW-0963">Cytoplasm</keyword>
<keyword id="KW-0418">Kinase</keyword>
<keyword id="KW-0547">Nucleotide-binding</keyword>
<keyword id="KW-0641">Proline biosynthesis</keyword>
<keyword id="KW-1185">Reference proteome</keyword>
<keyword id="KW-0808">Transferase</keyword>
<dbReference type="EC" id="2.7.2.11" evidence="1"/>
<dbReference type="EMBL" id="AM286690">
    <property type="protein sequence ID" value="CAL15903.1"/>
    <property type="molecule type" value="Genomic_DNA"/>
</dbReference>
<dbReference type="RefSeq" id="WP_011587741.1">
    <property type="nucleotide sequence ID" value="NC_008260.1"/>
</dbReference>
<dbReference type="SMR" id="Q0VSE5"/>
<dbReference type="STRING" id="393595.ABO_0455"/>
<dbReference type="KEGG" id="abo:ABO_0455"/>
<dbReference type="eggNOG" id="COG0263">
    <property type="taxonomic scope" value="Bacteria"/>
</dbReference>
<dbReference type="HOGENOM" id="CLU_025400_2_0_6"/>
<dbReference type="OrthoDB" id="9804434at2"/>
<dbReference type="UniPathway" id="UPA00098">
    <property type="reaction ID" value="UER00359"/>
</dbReference>
<dbReference type="Proteomes" id="UP000008871">
    <property type="component" value="Chromosome"/>
</dbReference>
<dbReference type="GO" id="GO:0005829">
    <property type="term" value="C:cytosol"/>
    <property type="evidence" value="ECO:0007669"/>
    <property type="project" value="TreeGrafter"/>
</dbReference>
<dbReference type="GO" id="GO:0005524">
    <property type="term" value="F:ATP binding"/>
    <property type="evidence" value="ECO:0007669"/>
    <property type="project" value="UniProtKB-KW"/>
</dbReference>
<dbReference type="GO" id="GO:0004349">
    <property type="term" value="F:glutamate 5-kinase activity"/>
    <property type="evidence" value="ECO:0007669"/>
    <property type="project" value="UniProtKB-UniRule"/>
</dbReference>
<dbReference type="GO" id="GO:0003723">
    <property type="term" value="F:RNA binding"/>
    <property type="evidence" value="ECO:0007669"/>
    <property type="project" value="InterPro"/>
</dbReference>
<dbReference type="GO" id="GO:0055129">
    <property type="term" value="P:L-proline biosynthetic process"/>
    <property type="evidence" value="ECO:0007669"/>
    <property type="project" value="UniProtKB-UniRule"/>
</dbReference>
<dbReference type="CDD" id="cd04242">
    <property type="entry name" value="AAK_G5K_ProB"/>
    <property type="match status" value="1"/>
</dbReference>
<dbReference type="CDD" id="cd21157">
    <property type="entry name" value="PUA_G5K"/>
    <property type="match status" value="1"/>
</dbReference>
<dbReference type="FunFam" id="2.30.130.10:FF:000007">
    <property type="entry name" value="Glutamate 5-kinase"/>
    <property type="match status" value="1"/>
</dbReference>
<dbReference type="FunFam" id="3.40.1160.10:FF:000018">
    <property type="entry name" value="Glutamate 5-kinase"/>
    <property type="match status" value="1"/>
</dbReference>
<dbReference type="Gene3D" id="3.40.1160.10">
    <property type="entry name" value="Acetylglutamate kinase-like"/>
    <property type="match status" value="2"/>
</dbReference>
<dbReference type="Gene3D" id="2.30.130.10">
    <property type="entry name" value="PUA domain"/>
    <property type="match status" value="1"/>
</dbReference>
<dbReference type="HAMAP" id="MF_00456">
    <property type="entry name" value="ProB"/>
    <property type="match status" value="1"/>
</dbReference>
<dbReference type="InterPro" id="IPR036393">
    <property type="entry name" value="AceGlu_kinase-like_sf"/>
</dbReference>
<dbReference type="InterPro" id="IPR001048">
    <property type="entry name" value="Asp/Glu/Uridylate_kinase"/>
</dbReference>
<dbReference type="InterPro" id="IPR041739">
    <property type="entry name" value="G5K_ProB"/>
</dbReference>
<dbReference type="InterPro" id="IPR001057">
    <property type="entry name" value="Glu/AcGlu_kinase"/>
</dbReference>
<dbReference type="InterPro" id="IPR011529">
    <property type="entry name" value="Glu_5kinase"/>
</dbReference>
<dbReference type="InterPro" id="IPR005715">
    <property type="entry name" value="Glu_5kinase/COase_Synthase"/>
</dbReference>
<dbReference type="InterPro" id="IPR019797">
    <property type="entry name" value="Glutamate_5-kinase_CS"/>
</dbReference>
<dbReference type="InterPro" id="IPR002478">
    <property type="entry name" value="PUA"/>
</dbReference>
<dbReference type="InterPro" id="IPR015947">
    <property type="entry name" value="PUA-like_sf"/>
</dbReference>
<dbReference type="InterPro" id="IPR036974">
    <property type="entry name" value="PUA_sf"/>
</dbReference>
<dbReference type="NCBIfam" id="TIGR01027">
    <property type="entry name" value="proB"/>
    <property type="match status" value="1"/>
</dbReference>
<dbReference type="PANTHER" id="PTHR43654">
    <property type="entry name" value="GLUTAMATE 5-KINASE"/>
    <property type="match status" value="1"/>
</dbReference>
<dbReference type="PANTHER" id="PTHR43654:SF1">
    <property type="entry name" value="ISOPENTENYL PHOSPHATE KINASE"/>
    <property type="match status" value="1"/>
</dbReference>
<dbReference type="Pfam" id="PF00696">
    <property type="entry name" value="AA_kinase"/>
    <property type="match status" value="1"/>
</dbReference>
<dbReference type="Pfam" id="PF01472">
    <property type="entry name" value="PUA"/>
    <property type="match status" value="1"/>
</dbReference>
<dbReference type="PIRSF" id="PIRSF000729">
    <property type="entry name" value="GK"/>
    <property type="match status" value="1"/>
</dbReference>
<dbReference type="PRINTS" id="PR00474">
    <property type="entry name" value="GLU5KINASE"/>
</dbReference>
<dbReference type="SMART" id="SM00359">
    <property type="entry name" value="PUA"/>
    <property type="match status" value="1"/>
</dbReference>
<dbReference type="SUPFAM" id="SSF53633">
    <property type="entry name" value="Carbamate kinase-like"/>
    <property type="match status" value="1"/>
</dbReference>
<dbReference type="SUPFAM" id="SSF88697">
    <property type="entry name" value="PUA domain-like"/>
    <property type="match status" value="1"/>
</dbReference>
<dbReference type="PROSITE" id="PS00902">
    <property type="entry name" value="GLUTAMATE_5_KINASE"/>
    <property type="match status" value="1"/>
</dbReference>
<dbReference type="PROSITE" id="PS50890">
    <property type="entry name" value="PUA"/>
    <property type="match status" value="1"/>
</dbReference>
<organism>
    <name type="scientific">Alcanivorax borkumensis (strain ATCC 700651 / DSM 11573 / NCIMB 13689 / SK2)</name>
    <dbReference type="NCBI Taxonomy" id="393595"/>
    <lineage>
        <taxon>Bacteria</taxon>
        <taxon>Pseudomonadati</taxon>
        <taxon>Pseudomonadota</taxon>
        <taxon>Gammaproteobacteria</taxon>
        <taxon>Oceanospirillales</taxon>
        <taxon>Alcanivoracaceae</taxon>
        <taxon>Alcanivorax</taxon>
    </lineage>
</organism>
<name>PROB_ALCBS</name>
<comment type="function">
    <text evidence="1">Catalyzes the transfer of a phosphate group to glutamate to form L-glutamate 5-phosphate.</text>
</comment>
<comment type="catalytic activity">
    <reaction evidence="1">
        <text>L-glutamate + ATP = L-glutamyl 5-phosphate + ADP</text>
        <dbReference type="Rhea" id="RHEA:14877"/>
        <dbReference type="ChEBI" id="CHEBI:29985"/>
        <dbReference type="ChEBI" id="CHEBI:30616"/>
        <dbReference type="ChEBI" id="CHEBI:58274"/>
        <dbReference type="ChEBI" id="CHEBI:456216"/>
        <dbReference type="EC" id="2.7.2.11"/>
    </reaction>
</comment>
<comment type="pathway">
    <text evidence="1">Amino-acid biosynthesis; L-proline biosynthesis; L-glutamate 5-semialdehyde from L-glutamate: step 1/2.</text>
</comment>
<comment type="subcellular location">
    <subcellularLocation>
        <location evidence="1">Cytoplasm</location>
    </subcellularLocation>
</comment>
<comment type="similarity">
    <text evidence="1">Belongs to the glutamate 5-kinase family.</text>
</comment>
<accession>Q0VSE5</accession>
<evidence type="ECO:0000255" key="1">
    <source>
        <dbReference type="HAMAP-Rule" id="MF_00456"/>
    </source>
</evidence>